<proteinExistence type="evidence at protein level"/>
<organism>
    <name type="scientific">Saccharomyces cerevisiae (strain ATCC 204508 / S288c)</name>
    <name type="common">Baker's yeast</name>
    <dbReference type="NCBI Taxonomy" id="559292"/>
    <lineage>
        <taxon>Eukaryota</taxon>
        <taxon>Fungi</taxon>
        <taxon>Dikarya</taxon>
        <taxon>Ascomycota</taxon>
        <taxon>Saccharomycotina</taxon>
        <taxon>Saccharomycetes</taxon>
        <taxon>Saccharomycetales</taxon>
        <taxon>Saccharomycetaceae</taxon>
        <taxon>Saccharomyces</taxon>
    </lineage>
</organism>
<protein>
    <recommendedName>
        <fullName>Proteasome chaperone 4</fullName>
    </recommendedName>
</protein>
<sequence length="148" mass="16573">MLVKTISRTIESESGFLQPTLDVIATLPADDRSKKIPISLVVGFKQEASLNSSSSLSCYYYAIPLMRDRHINLKSGGSNVVGIPLLDTKDDRIRDMARHMATIISERFNRPCYVTWSSLPSEDPSMLVANHLYILKKCLDLLKTELGE</sequence>
<dbReference type="EMBL" id="X96770">
    <property type="protein sequence ID" value="CAA65549.1"/>
    <property type="molecule type" value="Genomic_DNA"/>
</dbReference>
<dbReference type="EMBL" id="U43703">
    <property type="protein sequence ID" value="AAB68232.1"/>
    <property type="molecule type" value="Genomic_DNA"/>
</dbReference>
<dbReference type="EMBL" id="Z73500">
    <property type="protein sequence ID" value="CAA97848.1"/>
    <property type="molecule type" value="Genomic_DNA"/>
</dbReference>
<dbReference type="EMBL" id="AY558135">
    <property type="protein sequence ID" value="AAS56461.1"/>
    <property type="molecule type" value="Genomic_DNA"/>
</dbReference>
<dbReference type="EMBL" id="BK006949">
    <property type="protein sequence ID" value="DAA11291.1"/>
    <property type="molecule type" value="Genomic_DNA"/>
</dbReference>
<dbReference type="PIR" id="S65155">
    <property type="entry name" value="S65155"/>
</dbReference>
<dbReference type="RefSeq" id="NP_015181.1">
    <property type="nucleotide sequence ID" value="NM_001183958.1"/>
</dbReference>
<dbReference type="PDB" id="2Z5B">
    <property type="method" value="X-ray"/>
    <property type="resolution" value="1.96 A"/>
    <property type="chains" value="A=1-148"/>
</dbReference>
<dbReference type="PDB" id="2Z5C">
    <property type="method" value="X-ray"/>
    <property type="resolution" value="2.90 A"/>
    <property type="chains" value="A/D=1-148"/>
</dbReference>
<dbReference type="PDBsum" id="2Z5B"/>
<dbReference type="PDBsum" id="2Z5C"/>
<dbReference type="SMR" id="Q12245"/>
<dbReference type="BioGRID" id="36039">
    <property type="interactions" value="342"/>
</dbReference>
<dbReference type="ComplexPortal" id="CPX-8172">
    <property type="entry name" value="PBA3-PBA4 proteasomal chaperone complex"/>
</dbReference>
<dbReference type="DIP" id="DIP-8930N"/>
<dbReference type="FunCoup" id="Q12245">
    <property type="interactions" value="72"/>
</dbReference>
<dbReference type="IntAct" id="Q12245">
    <property type="interactions" value="13"/>
</dbReference>
<dbReference type="MINT" id="Q12245"/>
<dbReference type="STRING" id="4932.YPL144W"/>
<dbReference type="PaxDb" id="4932-YPL144W"/>
<dbReference type="PeptideAtlas" id="Q12245"/>
<dbReference type="EnsemblFungi" id="YPL144W_mRNA">
    <property type="protein sequence ID" value="YPL144W"/>
    <property type="gene ID" value="YPL144W"/>
</dbReference>
<dbReference type="GeneID" id="855959"/>
<dbReference type="KEGG" id="sce:YPL144W"/>
<dbReference type="AGR" id="SGD:S000006065"/>
<dbReference type="SGD" id="S000006065">
    <property type="gene designation" value="POC4"/>
</dbReference>
<dbReference type="VEuPathDB" id="FungiDB:YPL144W"/>
<dbReference type="eggNOG" id="ENOG502S7JE">
    <property type="taxonomic scope" value="Eukaryota"/>
</dbReference>
<dbReference type="HOGENOM" id="CLU_133955_0_0_1"/>
<dbReference type="InParanoid" id="Q12245"/>
<dbReference type="OMA" id="HMATIIS"/>
<dbReference type="OrthoDB" id="4035555at2759"/>
<dbReference type="BioCyc" id="YEAST:G3O-34041-MONOMER"/>
<dbReference type="BioGRID-ORCS" id="855959">
    <property type="hits" value="1 hit in 10 CRISPR screens"/>
</dbReference>
<dbReference type="EvolutionaryTrace" id="Q12245"/>
<dbReference type="PRO" id="PR:Q12245"/>
<dbReference type="Proteomes" id="UP000002311">
    <property type="component" value="Chromosome XVI"/>
</dbReference>
<dbReference type="RNAct" id="Q12245">
    <property type="molecule type" value="protein"/>
</dbReference>
<dbReference type="GO" id="GO:0005737">
    <property type="term" value="C:cytoplasm"/>
    <property type="evidence" value="ECO:0000314"/>
    <property type="project" value="SGD"/>
</dbReference>
<dbReference type="GO" id="GO:0005634">
    <property type="term" value="C:nucleus"/>
    <property type="evidence" value="ECO:0000314"/>
    <property type="project" value="SGD"/>
</dbReference>
<dbReference type="GO" id="GO:0032991">
    <property type="term" value="C:protein-containing complex"/>
    <property type="evidence" value="ECO:0000314"/>
    <property type="project" value="UniProtKB"/>
</dbReference>
<dbReference type="GO" id="GO:0051131">
    <property type="term" value="P:chaperone-mediated protein complex assembly"/>
    <property type="evidence" value="ECO:0000315"/>
    <property type="project" value="SGD"/>
</dbReference>
<dbReference type="GO" id="GO:0043248">
    <property type="term" value="P:proteasome assembly"/>
    <property type="evidence" value="ECO:0000315"/>
    <property type="project" value="SGD"/>
</dbReference>
<dbReference type="Gene3D" id="3.30.230.100">
    <property type="match status" value="1"/>
</dbReference>
<dbReference type="InterPro" id="IPR018854">
    <property type="entry name" value="Psome_chaperone_3/4"/>
</dbReference>
<dbReference type="Pfam" id="PF10448">
    <property type="entry name" value="POC3_POC4"/>
    <property type="match status" value="1"/>
</dbReference>
<name>POC4_YEAST</name>
<accession>Q12245</accession>
<accession>D6W3M5</accession>
<accession>Q6Q5F7</accession>
<keyword id="KW-0002">3D-structure</keyword>
<keyword id="KW-0143">Chaperone</keyword>
<keyword id="KW-0963">Cytoplasm</keyword>
<keyword id="KW-1185">Reference proteome</keyword>
<feature type="chain" id="PRO_0000238635" description="Proteasome chaperone 4">
    <location>
        <begin position="1"/>
        <end position="148"/>
    </location>
</feature>
<feature type="sequence conflict" description="In Ref. 4; AAS56461." evidence="6" ref="4">
    <original>T</original>
    <variation>P</variation>
    <location>
        <position position="9"/>
    </location>
</feature>
<feature type="strand" evidence="7">
    <location>
        <begin position="3"/>
        <end position="10"/>
    </location>
</feature>
<feature type="strand" evidence="7">
    <location>
        <begin position="21"/>
        <end position="30"/>
    </location>
</feature>
<feature type="strand" evidence="7">
    <location>
        <begin position="32"/>
        <end position="36"/>
    </location>
</feature>
<feature type="strand" evidence="7">
    <location>
        <begin position="38"/>
        <end position="44"/>
    </location>
</feature>
<feature type="strand" evidence="7">
    <location>
        <begin position="55"/>
        <end position="65"/>
    </location>
</feature>
<feature type="strand" evidence="7">
    <location>
        <begin position="80"/>
        <end position="86"/>
    </location>
</feature>
<feature type="helix" evidence="7">
    <location>
        <begin position="91"/>
        <end position="108"/>
    </location>
</feature>
<feature type="strand" evidence="7">
    <location>
        <begin position="112"/>
        <end position="118"/>
    </location>
</feature>
<feature type="helix" evidence="7">
    <location>
        <begin position="125"/>
        <end position="129"/>
    </location>
</feature>
<feature type="helix" evidence="7">
    <location>
        <begin position="131"/>
        <end position="146"/>
    </location>
</feature>
<comment type="function">
    <text evidence="3 4 5">Involved in 20S proteasome assembly, facilitating the alpha-ring formation. Involved in maintenance of telomere length.</text>
</comment>
<comment type="subunit">
    <text evidence="4 5">Component of the 20S proteasome chaperone. Forms a heterodimer with IRC25 that binds to proteasome precursors. Interacts with POP2.</text>
</comment>
<comment type="interaction">
    <interactant intactId="EBI-2343020">
        <id>Q12245</id>
    </interactant>
    <interactant intactId="EBI-31959">
        <id>Q07951</id>
        <label>IRC25</label>
    </interactant>
    <organismsDiffer>false</organismsDiffer>
    <experiments>13</experiments>
</comment>
<comment type="interaction">
    <interactant intactId="EBI-2343020">
        <id>Q12245</id>
    </interactant>
    <interactant intactId="EBI-13955">
        <id>P40302</id>
        <label>PRE5</label>
    </interactant>
    <organismsDiffer>false</organismsDiffer>
    <experiments>2</experiments>
</comment>
<comment type="interaction">
    <interactant intactId="EBI-2343020">
        <id>Q12245</id>
    </interactant>
    <interactant intactId="EBI-13959">
        <id>P23639</id>
        <label>PRE8</label>
    </interactant>
    <organismsDiffer>false</organismsDiffer>
    <experiments>2</experiments>
</comment>
<comment type="interaction">
    <interactant intactId="EBI-2343020">
        <id>Q12245</id>
    </interactant>
    <interactant intactId="EBI-13971">
        <id>P32379</id>
        <label>PUP2</label>
    </interactant>
    <organismsDiffer>false</organismsDiffer>
    <experiments>2</experiments>
</comment>
<comment type="subcellular location">
    <subcellularLocation>
        <location evidence="1">Cytoplasm</location>
    </subcellularLocation>
</comment>
<comment type="miscellaneous">
    <text evidence="2">Present with 2210 molecules/cell in log phase SD medium.</text>
</comment>
<comment type="similarity">
    <text evidence="6">Belongs to the PSMG4 family.</text>
</comment>
<gene>
    <name type="primary">POC4</name>
    <name type="synonym">DMP1</name>
    <name type="ordered locus">YPL144W</name>
</gene>
<reference key="1">
    <citation type="journal article" date="1996" name="Yeast">
        <title>The sequence of 55 kb on the left arm of yeast chromosome XVI identifies a small nuclear RNA, a new putative protein kinase and two new putative regulators.</title>
        <authorList>
            <person name="Purnelle B."/>
            <person name="Coster F."/>
            <person name="Goffeau A."/>
        </authorList>
    </citation>
    <scope>NUCLEOTIDE SEQUENCE [GENOMIC DNA]</scope>
    <source>
        <strain>ATCC 204511 / S288c / AB972</strain>
    </source>
</reference>
<reference key="2">
    <citation type="journal article" date="1997" name="Nature">
        <title>The nucleotide sequence of Saccharomyces cerevisiae chromosome XVI.</title>
        <authorList>
            <person name="Bussey H."/>
            <person name="Storms R.K."/>
            <person name="Ahmed A."/>
            <person name="Albermann K."/>
            <person name="Allen E."/>
            <person name="Ansorge W."/>
            <person name="Araujo R."/>
            <person name="Aparicio A."/>
            <person name="Barrell B.G."/>
            <person name="Badcock K."/>
            <person name="Benes V."/>
            <person name="Botstein D."/>
            <person name="Bowman S."/>
            <person name="Brueckner M."/>
            <person name="Carpenter J."/>
            <person name="Cherry J.M."/>
            <person name="Chung E."/>
            <person name="Churcher C.M."/>
            <person name="Coster F."/>
            <person name="Davis K."/>
            <person name="Davis R.W."/>
            <person name="Dietrich F.S."/>
            <person name="Delius H."/>
            <person name="DiPaolo T."/>
            <person name="Dubois E."/>
            <person name="Duesterhoeft A."/>
            <person name="Duncan M."/>
            <person name="Floeth M."/>
            <person name="Fortin N."/>
            <person name="Friesen J.D."/>
            <person name="Fritz C."/>
            <person name="Goffeau A."/>
            <person name="Hall J."/>
            <person name="Hebling U."/>
            <person name="Heumann K."/>
            <person name="Hilbert H."/>
            <person name="Hillier L.W."/>
            <person name="Hunicke-Smith S."/>
            <person name="Hyman R.W."/>
            <person name="Johnston M."/>
            <person name="Kalman S."/>
            <person name="Kleine K."/>
            <person name="Komp C."/>
            <person name="Kurdi O."/>
            <person name="Lashkari D."/>
            <person name="Lew H."/>
            <person name="Lin A."/>
            <person name="Lin D."/>
            <person name="Louis E.J."/>
            <person name="Marathe R."/>
            <person name="Messenguy F."/>
            <person name="Mewes H.-W."/>
            <person name="Mirtipati S."/>
            <person name="Moestl D."/>
            <person name="Mueller-Auer S."/>
            <person name="Namath A."/>
            <person name="Nentwich U."/>
            <person name="Oefner P."/>
            <person name="Pearson D."/>
            <person name="Petel F.X."/>
            <person name="Pohl T.M."/>
            <person name="Purnelle B."/>
            <person name="Rajandream M.A."/>
            <person name="Rechmann S."/>
            <person name="Rieger M."/>
            <person name="Riles L."/>
            <person name="Roberts D."/>
            <person name="Schaefer M."/>
            <person name="Scharfe M."/>
            <person name="Scherens B."/>
            <person name="Schramm S."/>
            <person name="Schroeder M."/>
            <person name="Sdicu A.-M."/>
            <person name="Tettelin H."/>
            <person name="Urrestarazu L.A."/>
            <person name="Ushinsky S."/>
            <person name="Vierendeels F."/>
            <person name="Vissers S."/>
            <person name="Voss H."/>
            <person name="Walsh S.V."/>
            <person name="Wambutt R."/>
            <person name="Wang Y."/>
            <person name="Wedler E."/>
            <person name="Wedler H."/>
            <person name="Winnett E."/>
            <person name="Zhong W.-W."/>
            <person name="Zollner A."/>
            <person name="Vo D.H."/>
            <person name="Hani J."/>
        </authorList>
    </citation>
    <scope>NUCLEOTIDE SEQUENCE [LARGE SCALE GENOMIC DNA]</scope>
    <source>
        <strain>ATCC 204508 / S288c</strain>
    </source>
</reference>
<reference key="3">
    <citation type="journal article" date="2014" name="G3 (Bethesda)">
        <title>The reference genome sequence of Saccharomyces cerevisiae: Then and now.</title>
        <authorList>
            <person name="Engel S.R."/>
            <person name="Dietrich F.S."/>
            <person name="Fisk D.G."/>
            <person name="Binkley G."/>
            <person name="Balakrishnan R."/>
            <person name="Costanzo M.C."/>
            <person name="Dwight S.S."/>
            <person name="Hitz B.C."/>
            <person name="Karra K."/>
            <person name="Nash R.S."/>
            <person name="Weng S."/>
            <person name="Wong E.D."/>
            <person name="Lloyd P."/>
            <person name="Skrzypek M.S."/>
            <person name="Miyasato S.R."/>
            <person name="Simison M."/>
            <person name="Cherry J.M."/>
        </authorList>
    </citation>
    <scope>GENOME REANNOTATION</scope>
    <source>
        <strain>ATCC 204508 / S288c</strain>
    </source>
</reference>
<reference key="4">
    <citation type="journal article" date="2007" name="Genome Res.">
        <title>Approaching a complete repository of sequence-verified protein-encoding clones for Saccharomyces cerevisiae.</title>
        <authorList>
            <person name="Hu Y."/>
            <person name="Rolfs A."/>
            <person name="Bhullar B."/>
            <person name="Murthy T.V.S."/>
            <person name="Zhu C."/>
            <person name="Berger M.F."/>
            <person name="Camargo A.A."/>
            <person name="Kelley F."/>
            <person name="McCarron S."/>
            <person name="Jepson D."/>
            <person name="Richardson A."/>
            <person name="Raphael J."/>
            <person name="Moreira D."/>
            <person name="Taycher E."/>
            <person name="Zuo D."/>
            <person name="Mohr S."/>
            <person name="Kane M.F."/>
            <person name="Williamson J."/>
            <person name="Simpson A.J.G."/>
            <person name="Bulyk M.L."/>
            <person name="Harlow E."/>
            <person name="Marsischky G."/>
            <person name="Kolodner R.D."/>
            <person name="LaBaer J."/>
        </authorList>
    </citation>
    <scope>NUCLEOTIDE SEQUENCE [GENOMIC DNA]</scope>
    <source>
        <strain>ATCC 204508 / S288c</strain>
    </source>
</reference>
<reference key="5">
    <citation type="journal article" date="2003" name="Nature">
        <title>Global analysis of protein localization in budding yeast.</title>
        <authorList>
            <person name="Huh W.-K."/>
            <person name="Falvo J.V."/>
            <person name="Gerke L.C."/>
            <person name="Carroll A.S."/>
            <person name="Howson R.W."/>
            <person name="Weissman J.S."/>
            <person name="O'Shea E.K."/>
        </authorList>
    </citation>
    <scope>SUBCELLULAR LOCATION [LARGE SCALE ANALYSIS]</scope>
</reference>
<reference key="6">
    <citation type="journal article" date="2003" name="Nature">
        <title>Global analysis of protein expression in yeast.</title>
        <authorList>
            <person name="Ghaemmaghami S."/>
            <person name="Huh W.-K."/>
            <person name="Bower K."/>
            <person name="Howson R.W."/>
            <person name="Belle A."/>
            <person name="Dephoure N."/>
            <person name="O'Shea E.K."/>
            <person name="Weissman J.S."/>
        </authorList>
    </citation>
    <scope>LEVEL OF PROTEIN EXPRESSION [LARGE SCALE ANALYSIS]</scope>
</reference>
<reference key="7">
    <citation type="journal article" date="2004" name="Proc. Natl. Acad. Sci. U.S.A.">
        <title>A genome-wide screen for Saccharomyces cerevisiae deletion mutants that affect telomere length.</title>
        <authorList>
            <person name="Askree S.H."/>
            <person name="Yehuda T."/>
            <person name="Smolikov S."/>
            <person name="Gurevich R."/>
            <person name="Hawk J."/>
            <person name="Coker C."/>
            <person name="Krauskopf A."/>
            <person name="Kupiec M."/>
            <person name="McEachern M.J."/>
        </authorList>
    </citation>
    <scope>FUNCTION</scope>
</reference>
<reference key="8">
    <citation type="journal article" date="2007" name="Mol. Cell">
        <title>20S proteasome assembly is orchestrated by two distinct pairs of chaperones in yeast and in mammals.</title>
        <authorList>
            <person name="Le Tallec B."/>
            <person name="Barrault M.-B."/>
            <person name="Courbeyrette R."/>
            <person name="Guerois R."/>
            <person name="Marsolier-Kergoat M.-C."/>
            <person name="Peyroche A."/>
        </authorList>
    </citation>
    <scope>GENE NAME</scope>
    <scope>FUNCTION</scope>
    <scope>INTERACTION WITH IRC25</scope>
    <scope>SUBUNIT</scope>
</reference>
<reference key="9">
    <citation type="journal article" date="2012" name="Proc. Natl. Acad. Sci. U.S.A.">
        <title>N-terminal acetylome analyses and functional insights of the N-terminal acetyltransferase NatB.</title>
        <authorList>
            <person name="Van Damme P."/>
            <person name="Lasa M."/>
            <person name="Polevoda B."/>
            <person name="Gazquez C."/>
            <person name="Elosegui-Artola A."/>
            <person name="Kim D.S."/>
            <person name="De Juan-Pardo E."/>
            <person name="Demeyer K."/>
            <person name="Hole K."/>
            <person name="Larrea E."/>
            <person name="Timmerman E."/>
            <person name="Prieto J."/>
            <person name="Arnesen T."/>
            <person name="Sherman F."/>
            <person name="Gevaert K."/>
            <person name="Aldabe R."/>
        </authorList>
    </citation>
    <scope>IDENTIFICATION BY MASS SPECTROMETRY [LARGE SCALE ANALYSIS]</scope>
</reference>
<reference key="10">
    <citation type="journal article" date="2008" name="Nat. Struct. Mol. Biol.">
        <title>Crystal structure of a chaperone complex that contributes to the assembly of yeast 20S proteasomes.</title>
        <authorList>
            <person name="Yashiroda H."/>
            <person name="Mizushima T."/>
            <person name="Okamoto K."/>
            <person name="Kameyama T."/>
            <person name="Hayashi H."/>
            <person name="Kishimoto T."/>
            <person name="Niwa S."/>
            <person name="Kasahara M."/>
            <person name="Kurimoto E."/>
            <person name="Sakata E."/>
            <person name="Takagi K."/>
            <person name="Suzuki A."/>
            <person name="Hirano Y."/>
            <person name="Murata S."/>
            <person name="Kato K."/>
            <person name="Yamane T."/>
            <person name="Tanaka K."/>
        </authorList>
    </citation>
    <scope>X-RAY CRYSTALLOGRAPHY (1.96 ANGSTROMS) IN COMPLEX WITH IRC25 AND PUP2</scope>
    <scope>FUNCTION</scope>
</reference>
<evidence type="ECO:0000269" key="1">
    <source>
    </source>
</evidence>
<evidence type="ECO:0000269" key="2">
    <source>
    </source>
</evidence>
<evidence type="ECO:0000269" key="3">
    <source>
    </source>
</evidence>
<evidence type="ECO:0000269" key="4">
    <source>
    </source>
</evidence>
<evidence type="ECO:0000269" key="5">
    <source>
    </source>
</evidence>
<evidence type="ECO:0000305" key="6"/>
<evidence type="ECO:0007829" key="7">
    <source>
        <dbReference type="PDB" id="2Z5B"/>
    </source>
</evidence>